<accession>Q03DK3</accession>
<dbReference type="EC" id="5.4.99.62" evidence="1"/>
<dbReference type="EMBL" id="CP000422">
    <property type="protein sequence ID" value="ABJ68719.1"/>
    <property type="molecule type" value="Genomic_DNA"/>
</dbReference>
<dbReference type="RefSeq" id="WP_011673818.1">
    <property type="nucleotide sequence ID" value="NC_008525.1"/>
</dbReference>
<dbReference type="SMR" id="Q03DK3"/>
<dbReference type="STRING" id="278197.PEPE_1698"/>
<dbReference type="GeneID" id="33062272"/>
<dbReference type="KEGG" id="ppe:PEPE_1698"/>
<dbReference type="eggNOG" id="COG1869">
    <property type="taxonomic scope" value="Bacteria"/>
</dbReference>
<dbReference type="HOGENOM" id="CLU_135498_0_0_9"/>
<dbReference type="OrthoDB" id="9805009at2"/>
<dbReference type="UniPathway" id="UPA00916">
    <property type="reaction ID" value="UER00888"/>
</dbReference>
<dbReference type="Proteomes" id="UP000000773">
    <property type="component" value="Chromosome"/>
</dbReference>
<dbReference type="GO" id="GO:0005829">
    <property type="term" value="C:cytosol"/>
    <property type="evidence" value="ECO:0007669"/>
    <property type="project" value="TreeGrafter"/>
</dbReference>
<dbReference type="GO" id="GO:0062193">
    <property type="term" value="F:D-ribose pyranase activity"/>
    <property type="evidence" value="ECO:0007669"/>
    <property type="project" value="UniProtKB-EC"/>
</dbReference>
<dbReference type="GO" id="GO:0016872">
    <property type="term" value="F:intramolecular lyase activity"/>
    <property type="evidence" value="ECO:0007669"/>
    <property type="project" value="UniProtKB-UniRule"/>
</dbReference>
<dbReference type="GO" id="GO:0048029">
    <property type="term" value="F:monosaccharide binding"/>
    <property type="evidence" value="ECO:0007669"/>
    <property type="project" value="InterPro"/>
</dbReference>
<dbReference type="GO" id="GO:0019303">
    <property type="term" value="P:D-ribose catabolic process"/>
    <property type="evidence" value="ECO:0007669"/>
    <property type="project" value="UniProtKB-UniRule"/>
</dbReference>
<dbReference type="FunFam" id="3.40.1650.10:FF:000004">
    <property type="entry name" value="D-ribose pyranase"/>
    <property type="match status" value="1"/>
</dbReference>
<dbReference type="Gene3D" id="3.40.1650.10">
    <property type="entry name" value="RbsD-like domain"/>
    <property type="match status" value="1"/>
</dbReference>
<dbReference type="HAMAP" id="MF_01661">
    <property type="entry name" value="D_rib_pyranase"/>
    <property type="match status" value="1"/>
</dbReference>
<dbReference type="InterPro" id="IPR023064">
    <property type="entry name" value="D-ribose_pyranase"/>
</dbReference>
<dbReference type="InterPro" id="IPR023750">
    <property type="entry name" value="RbsD-like_sf"/>
</dbReference>
<dbReference type="InterPro" id="IPR007721">
    <property type="entry name" value="RbsD_FucU"/>
</dbReference>
<dbReference type="NCBIfam" id="NF008761">
    <property type="entry name" value="PRK11797.1"/>
    <property type="match status" value="1"/>
</dbReference>
<dbReference type="PANTHER" id="PTHR37831">
    <property type="entry name" value="D-RIBOSE PYRANASE"/>
    <property type="match status" value="1"/>
</dbReference>
<dbReference type="PANTHER" id="PTHR37831:SF1">
    <property type="entry name" value="D-RIBOSE PYRANASE"/>
    <property type="match status" value="1"/>
</dbReference>
<dbReference type="Pfam" id="PF05025">
    <property type="entry name" value="RbsD_FucU"/>
    <property type="match status" value="1"/>
</dbReference>
<dbReference type="SUPFAM" id="SSF102546">
    <property type="entry name" value="RbsD-like"/>
    <property type="match status" value="1"/>
</dbReference>
<feature type="chain" id="PRO_0000346229" description="D-ribose pyranase">
    <location>
        <begin position="1"/>
        <end position="131"/>
    </location>
</feature>
<feature type="active site" description="Proton donor" evidence="1">
    <location>
        <position position="20"/>
    </location>
</feature>
<feature type="binding site" evidence="1">
    <location>
        <position position="28"/>
    </location>
    <ligand>
        <name>substrate</name>
    </ligand>
</feature>
<feature type="binding site" evidence="1">
    <location>
        <position position="98"/>
    </location>
    <ligand>
        <name>substrate</name>
    </ligand>
</feature>
<feature type="binding site" evidence="1">
    <location>
        <begin position="120"/>
        <end position="122"/>
    </location>
    <ligand>
        <name>substrate</name>
    </ligand>
</feature>
<comment type="function">
    <text evidence="1">Catalyzes the interconversion of beta-pyran and beta-furan forms of D-ribose.</text>
</comment>
<comment type="catalytic activity">
    <reaction evidence="1">
        <text>beta-D-ribopyranose = beta-D-ribofuranose</text>
        <dbReference type="Rhea" id="RHEA:25432"/>
        <dbReference type="ChEBI" id="CHEBI:27476"/>
        <dbReference type="ChEBI" id="CHEBI:47002"/>
        <dbReference type="EC" id="5.4.99.62"/>
    </reaction>
</comment>
<comment type="pathway">
    <text evidence="1">Carbohydrate metabolism; D-ribose degradation; D-ribose 5-phosphate from beta-D-ribopyranose: step 1/2.</text>
</comment>
<comment type="subunit">
    <text evidence="1">Homodecamer.</text>
</comment>
<comment type="subcellular location">
    <subcellularLocation>
        <location evidence="1">Cytoplasm</location>
    </subcellularLocation>
</comment>
<comment type="similarity">
    <text evidence="1">Belongs to the RbsD / FucU family. RbsD subfamily.</text>
</comment>
<organism>
    <name type="scientific">Pediococcus pentosaceus (strain ATCC 25745 / CCUG 21536 / LMG 10740 / 183-1w)</name>
    <dbReference type="NCBI Taxonomy" id="278197"/>
    <lineage>
        <taxon>Bacteria</taxon>
        <taxon>Bacillati</taxon>
        <taxon>Bacillota</taxon>
        <taxon>Bacilli</taxon>
        <taxon>Lactobacillales</taxon>
        <taxon>Lactobacillaceae</taxon>
        <taxon>Pediococcus</taxon>
    </lineage>
</organism>
<proteinExistence type="inferred from homology"/>
<keyword id="KW-0119">Carbohydrate metabolism</keyword>
<keyword id="KW-0963">Cytoplasm</keyword>
<keyword id="KW-0413">Isomerase</keyword>
<name>RBSD_PEDPA</name>
<gene>
    <name evidence="1" type="primary">rbsD</name>
    <name type="ordered locus">PEPE_1698</name>
</gene>
<reference key="1">
    <citation type="journal article" date="2006" name="Proc. Natl. Acad. Sci. U.S.A.">
        <title>Comparative genomics of the lactic acid bacteria.</title>
        <authorList>
            <person name="Makarova K.S."/>
            <person name="Slesarev A."/>
            <person name="Wolf Y.I."/>
            <person name="Sorokin A."/>
            <person name="Mirkin B."/>
            <person name="Koonin E.V."/>
            <person name="Pavlov A."/>
            <person name="Pavlova N."/>
            <person name="Karamychev V."/>
            <person name="Polouchine N."/>
            <person name="Shakhova V."/>
            <person name="Grigoriev I."/>
            <person name="Lou Y."/>
            <person name="Rohksar D."/>
            <person name="Lucas S."/>
            <person name="Huang K."/>
            <person name="Goodstein D.M."/>
            <person name="Hawkins T."/>
            <person name="Plengvidhya V."/>
            <person name="Welker D."/>
            <person name="Hughes J."/>
            <person name="Goh Y."/>
            <person name="Benson A."/>
            <person name="Baldwin K."/>
            <person name="Lee J.-H."/>
            <person name="Diaz-Muniz I."/>
            <person name="Dosti B."/>
            <person name="Smeianov V."/>
            <person name="Wechter W."/>
            <person name="Barabote R."/>
            <person name="Lorca G."/>
            <person name="Altermann E."/>
            <person name="Barrangou R."/>
            <person name="Ganesan B."/>
            <person name="Xie Y."/>
            <person name="Rawsthorne H."/>
            <person name="Tamir D."/>
            <person name="Parker C."/>
            <person name="Breidt F."/>
            <person name="Broadbent J.R."/>
            <person name="Hutkins R."/>
            <person name="O'Sullivan D."/>
            <person name="Steele J."/>
            <person name="Unlu G."/>
            <person name="Saier M.H. Jr."/>
            <person name="Klaenhammer T."/>
            <person name="Richardson P."/>
            <person name="Kozyavkin S."/>
            <person name="Weimer B.C."/>
            <person name="Mills D.A."/>
        </authorList>
    </citation>
    <scope>NUCLEOTIDE SEQUENCE [LARGE SCALE GENOMIC DNA]</scope>
    <source>
        <strain>ATCC 25745 / CCUG 21536 / LMG 10740 / 183-1w</strain>
    </source>
</reference>
<evidence type="ECO:0000255" key="1">
    <source>
        <dbReference type="HAMAP-Rule" id="MF_01661"/>
    </source>
</evidence>
<sequence length="131" mass="14744">MKKTKMINSDMSRVIAQMGHFDKLSIGDAGMPVPMGIEKIDLAVDNGIPSFMQVLTNVLEELEVQRIYLAEEIKTENPKMLENIKALMPETPITFMPHSDMKQDLNNCHAFVRTGEMTPYSNIILESGVVF</sequence>
<protein>
    <recommendedName>
        <fullName evidence="1">D-ribose pyranase</fullName>
        <ecNumber evidence="1">5.4.99.62</ecNumber>
    </recommendedName>
</protein>